<proteinExistence type="inferred from homology"/>
<reference key="1">
    <citation type="journal article" date="2008" name="J. Bacteriol.">
        <title>Genome of the actinomycete plant pathogen Clavibacter michiganensis subsp. sepedonicus suggests recent niche adaptation.</title>
        <authorList>
            <person name="Bentley S.D."/>
            <person name="Corton C."/>
            <person name="Brown S.E."/>
            <person name="Barron A."/>
            <person name="Clark L."/>
            <person name="Doggett J."/>
            <person name="Harris B."/>
            <person name="Ormond D."/>
            <person name="Quail M.A."/>
            <person name="May G."/>
            <person name="Francis D."/>
            <person name="Knudson D."/>
            <person name="Parkhill J."/>
            <person name="Ishimaru C.A."/>
        </authorList>
    </citation>
    <scope>NUCLEOTIDE SEQUENCE [LARGE SCALE GENOMIC DNA]</scope>
    <source>
        <strain>ATCC 33113 / DSM 20744 / JCM 9667 / LMG 2889 / ICMP 2535 / C-1</strain>
    </source>
</reference>
<protein>
    <recommendedName>
        <fullName evidence="1">Large ribosomal subunit protein uL3</fullName>
    </recommendedName>
    <alternativeName>
        <fullName evidence="3">50S ribosomal protein L3</fullName>
    </alternativeName>
</protein>
<keyword id="KW-0687">Ribonucleoprotein</keyword>
<keyword id="KW-0689">Ribosomal protein</keyword>
<keyword id="KW-0694">RNA-binding</keyword>
<keyword id="KW-0699">rRNA-binding</keyword>
<evidence type="ECO:0000255" key="1">
    <source>
        <dbReference type="HAMAP-Rule" id="MF_01325"/>
    </source>
</evidence>
<evidence type="ECO:0000256" key="2">
    <source>
        <dbReference type="SAM" id="MobiDB-lite"/>
    </source>
</evidence>
<evidence type="ECO:0000305" key="3"/>
<name>RL3_CLASE</name>
<comment type="function">
    <text evidence="1">One of the primary rRNA binding proteins, it binds directly near the 3'-end of the 23S rRNA, where it nucleates assembly of the 50S subunit.</text>
</comment>
<comment type="subunit">
    <text evidence="1">Part of the 50S ribosomal subunit. Forms a cluster with proteins L14 and L19.</text>
</comment>
<comment type="similarity">
    <text evidence="1">Belongs to the universal ribosomal protein uL3 family.</text>
</comment>
<feature type="chain" id="PRO_0000353600" description="Large ribosomal subunit protein uL3">
    <location>
        <begin position="1"/>
        <end position="217"/>
    </location>
</feature>
<feature type="region of interest" description="Disordered" evidence="2">
    <location>
        <begin position="137"/>
        <end position="160"/>
    </location>
</feature>
<organism>
    <name type="scientific">Clavibacter sepedonicus</name>
    <name type="common">Clavibacter michiganensis subsp. sepedonicus</name>
    <dbReference type="NCBI Taxonomy" id="31964"/>
    <lineage>
        <taxon>Bacteria</taxon>
        <taxon>Bacillati</taxon>
        <taxon>Actinomycetota</taxon>
        <taxon>Actinomycetes</taxon>
        <taxon>Micrococcales</taxon>
        <taxon>Microbacteriaceae</taxon>
        <taxon>Clavibacter</taxon>
    </lineage>
</organism>
<dbReference type="EMBL" id="AM849034">
    <property type="protein sequence ID" value="CAQ00404.1"/>
    <property type="molecule type" value="Genomic_DNA"/>
</dbReference>
<dbReference type="RefSeq" id="WP_012297754.1">
    <property type="nucleotide sequence ID" value="NZ_MZMN01000003.1"/>
</dbReference>
<dbReference type="SMR" id="B0RB39"/>
<dbReference type="STRING" id="31964.CMS0283"/>
<dbReference type="KEGG" id="cms:CMS0283"/>
<dbReference type="eggNOG" id="COG0087">
    <property type="taxonomic scope" value="Bacteria"/>
</dbReference>
<dbReference type="HOGENOM" id="CLU_044142_4_1_11"/>
<dbReference type="OrthoDB" id="9806135at2"/>
<dbReference type="Proteomes" id="UP000001318">
    <property type="component" value="Chromosome"/>
</dbReference>
<dbReference type="GO" id="GO:0022625">
    <property type="term" value="C:cytosolic large ribosomal subunit"/>
    <property type="evidence" value="ECO:0007669"/>
    <property type="project" value="TreeGrafter"/>
</dbReference>
<dbReference type="GO" id="GO:0019843">
    <property type="term" value="F:rRNA binding"/>
    <property type="evidence" value="ECO:0007669"/>
    <property type="project" value="UniProtKB-UniRule"/>
</dbReference>
<dbReference type="GO" id="GO:0003735">
    <property type="term" value="F:structural constituent of ribosome"/>
    <property type="evidence" value="ECO:0007669"/>
    <property type="project" value="InterPro"/>
</dbReference>
<dbReference type="GO" id="GO:0006412">
    <property type="term" value="P:translation"/>
    <property type="evidence" value="ECO:0007669"/>
    <property type="project" value="UniProtKB-UniRule"/>
</dbReference>
<dbReference type="FunFam" id="2.40.30.10:FF:000004">
    <property type="entry name" value="50S ribosomal protein L3"/>
    <property type="match status" value="1"/>
</dbReference>
<dbReference type="FunFam" id="3.30.160.810:FF:000001">
    <property type="entry name" value="50S ribosomal protein L3"/>
    <property type="match status" value="1"/>
</dbReference>
<dbReference type="Gene3D" id="3.30.160.810">
    <property type="match status" value="1"/>
</dbReference>
<dbReference type="Gene3D" id="2.40.30.10">
    <property type="entry name" value="Translation factors"/>
    <property type="match status" value="1"/>
</dbReference>
<dbReference type="HAMAP" id="MF_01325_B">
    <property type="entry name" value="Ribosomal_uL3_B"/>
    <property type="match status" value="1"/>
</dbReference>
<dbReference type="InterPro" id="IPR000597">
    <property type="entry name" value="Ribosomal_uL3"/>
</dbReference>
<dbReference type="InterPro" id="IPR019927">
    <property type="entry name" value="Ribosomal_uL3_bac/org-type"/>
</dbReference>
<dbReference type="InterPro" id="IPR019926">
    <property type="entry name" value="Ribosomal_uL3_CS"/>
</dbReference>
<dbReference type="InterPro" id="IPR009000">
    <property type="entry name" value="Transl_B-barrel_sf"/>
</dbReference>
<dbReference type="NCBIfam" id="TIGR03625">
    <property type="entry name" value="L3_bact"/>
    <property type="match status" value="1"/>
</dbReference>
<dbReference type="PANTHER" id="PTHR11229">
    <property type="entry name" value="50S RIBOSOMAL PROTEIN L3"/>
    <property type="match status" value="1"/>
</dbReference>
<dbReference type="PANTHER" id="PTHR11229:SF16">
    <property type="entry name" value="LARGE RIBOSOMAL SUBUNIT PROTEIN UL3C"/>
    <property type="match status" value="1"/>
</dbReference>
<dbReference type="Pfam" id="PF00297">
    <property type="entry name" value="Ribosomal_L3"/>
    <property type="match status" value="1"/>
</dbReference>
<dbReference type="SUPFAM" id="SSF50447">
    <property type="entry name" value="Translation proteins"/>
    <property type="match status" value="1"/>
</dbReference>
<dbReference type="PROSITE" id="PS00474">
    <property type="entry name" value="RIBOSOMAL_L3"/>
    <property type="match status" value="1"/>
</dbReference>
<accession>B0RB39</accession>
<sequence length="217" mass="23215">MSTANRTFTGLLGTKLGMTQVWDENNKLIPVTVVQITPNVVTQVRTPEVDGYGAIQIAYGQIDPRKADKPSTGHFDKAGVTPRRHLTEVRTADFAEYTLGQEITVGAFEPGTKVDVVGTSKGKGFAGVMKRHNFKGVSASHGSHRNHRKPGSIGASSTPSRVFKGMRMAGRMGGERVTVLNLVVHSVDAEKGLLLVKGAVPGARGRIVFVRNAVKGK</sequence>
<gene>
    <name evidence="1" type="primary">rplC</name>
    <name type="ordered locus">CMS0283</name>
</gene>